<sequence>MGEYIMEKNTIILGIETSCDETAVAVVKNGTEIIANVVASQIESHKRFGGVVPEIASRHHVEEITVVLEEALKEANITFDDIDAIAVTEGPGLVGALLIGVNAAKAVAFAHDIPLVGVHHIAGHIYANRLVKEVQFPLLSLVVSGGHTELVYMKEHGSFEVIGETRDDAAGEAYDKVARTLSMPYPGGPHIDRLAHEGEPTIDLPRAWLEPDSYDFSFSGLKSAVINTVHNAKQRGIEIAPEDLAASFQESVIDVLVTKAARAAEAYNVKQLLLAGGVAANKGLRARLEEEFAQKENIELIIPPLSLCTDNAAMIAAAGTIAYEQGKRATLALNANPGLDIEA</sequence>
<dbReference type="EC" id="2.3.1.234" evidence="1"/>
<dbReference type="EMBL" id="AE016877">
    <property type="protein sequence ID" value="AAP07341.1"/>
    <property type="molecule type" value="Genomic_DNA"/>
</dbReference>
<dbReference type="SMR" id="Q81IS8"/>
<dbReference type="STRING" id="226900.BC_0289"/>
<dbReference type="KEGG" id="bce:BC0289"/>
<dbReference type="HOGENOM" id="CLU_023208_0_2_9"/>
<dbReference type="Proteomes" id="UP000001417">
    <property type="component" value="Chromosome"/>
</dbReference>
<dbReference type="GO" id="GO:0005737">
    <property type="term" value="C:cytoplasm"/>
    <property type="evidence" value="ECO:0007669"/>
    <property type="project" value="UniProtKB-SubCell"/>
</dbReference>
<dbReference type="GO" id="GO:0005506">
    <property type="term" value="F:iron ion binding"/>
    <property type="evidence" value="ECO:0007669"/>
    <property type="project" value="UniProtKB-UniRule"/>
</dbReference>
<dbReference type="GO" id="GO:0061711">
    <property type="term" value="F:N(6)-L-threonylcarbamoyladenine synthase activity"/>
    <property type="evidence" value="ECO:0007669"/>
    <property type="project" value="UniProtKB-EC"/>
</dbReference>
<dbReference type="GO" id="GO:0002949">
    <property type="term" value="P:tRNA threonylcarbamoyladenosine modification"/>
    <property type="evidence" value="ECO:0007669"/>
    <property type="project" value="UniProtKB-UniRule"/>
</dbReference>
<dbReference type="CDD" id="cd24133">
    <property type="entry name" value="ASKHA_NBD_TsaD_bac"/>
    <property type="match status" value="1"/>
</dbReference>
<dbReference type="FunFam" id="3.30.420.40:FF:000012">
    <property type="entry name" value="tRNA N6-adenosine threonylcarbamoyltransferase"/>
    <property type="match status" value="1"/>
</dbReference>
<dbReference type="FunFam" id="3.30.420.40:FF:000040">
    <property type="entry name" value="tRNA N6-adenosine threonylcarbamoyltransferase"/>
    <property type="match status" value="1"/>
</dbReference>
<dbReference type="Gene3D" id="3.30.420.40">
    <property type="match status" value="2"/>
</dbReference>
<dbReference type="HAMAP" id="MF_01445">
    <property type="entry name" value="TsaD"/>
    <property type="match status" value="1"/>
</dbReference>
<dbReference type="InterPro" id="IPR043129">
    <property type="entry name" value="ATPase_NBD"/>
</dbReference>
<dbReference type="InterPro" id="IPR000905">
    <property type="entry name" value="Gcp-like_dom"/>
</dbReference>
<dbReference type="InterPro" id="IPR017861">
    <property type="entry name" value="KAE1/TsaD"/>
</dbReference>
<dbReference type="InterPro" id="IPR017860">
    <property type="entry name" value="Peptidase_M22_CS"/>
</dbReference>
<dbReference type="InterPro" id="IPR022450">
    <property type="entry name" value="TsaD"/>
</dbReference>
<dbReference type="NCBIfam" id="TIGR00329">
    <property type="entry name" value="gcp_kae1"/>
    <property type="match status" value="1"/>
</dbReference>
<dbReference type="NCBIfam" id="TIGR03723">
    <property type="entry name" value="T6A_TsaD_YgjD"/>
    <property type="match status" value="1"/>
</dbReference>
<dbReference type="PANTHER" id="PTHR11735">
    <property type="entry name" value="TRNA N6-ADENOSINE THREONYLCARBAMOYLTRANSFERASE"/>
    <property type="match status" value="1"/>
</dbReference>
<dbReference type="PANTHER" id="PTHR11735:SF6">
    <property type="entry name" value="TRNA N6-ADENOSINE THREONYLCARBAMOYLTRANSFERASE, MITOCHONDRIAL"/>
    <property type="match status" value="1"/>
</dbReference>
<dbReference type="Pfam" id="PF00814">
    <property type="entry name" value="TsaD"/>
    <property type="match status" value="1"/>
</dbReference>
<dbReference type="PRINTS" id="PR00789">
    <property type="entry name" value="OSIALOPTASE"/>
</dbReference>
<dbReference type="SUPFAM" id="SSF53067">
    <property type="entry name" value="Actin-like ATPase domain"/>
    <property type="match status" value="2"/>
</dbReference>
<dbReference type="PROSITE" id="PS01016">
    <property type="entry name" value="GLYCOPROTEASE"/>
    <property type="match status" value="1"/>
</dbReference>
<keyword id="KW-0012">Acyltransferase</keyword>
<keyword id="KW-0963">Cytoplasm</keyword>
<keyword id="KW-0408">Iron</keyword>
<keyword id="KW-0479">Metal-binding</keyword>
<keyword id="KW-1185">Reference proteome</keyword>
<keyword id="KW-0808">Transferase</keyword>
<keyword id="KW-0819">tRNA processing</keyword>
<proteinExistence type="inferred from homology"/>
<accession>Q81IS8</accession>
<name>TSAD_BACCR</name>
<reference key="1">
    <citation type="journal article" date="2003" name="Nature">
        <title>Genome sequence of Bacillus cereus and comparative analysis with Bacillus anthracis.</title>
        <authorList>
            <person name="Ivanova N."/>
            <person name="Sorokin A."/>
            <person name="Anderson I."/>
            <person name="Galleron N."/>
            <person name="Candelon B."/>
            <person name="Kapatral V."/>
            <person name="Bhattacharyya A."/>
            <person name="Reznik G."/>
            <person name="Mikhailova N."/>
            <person name="Lapidus A."/>
            <person name="Chu L."/>
            <person name="Mazur M."/>
            <person name="Goltsman E."/>
            <person name="Larsen N."/>
            <person name="D'Souza M."/>
            <person name="Walunas T."/>
            <person name="Grechkin Y."/>
            <person name="Pusch G."/>
            <person name="Haselkorn R."/>
            <person name="Fonstein M."/>
            <person name="Ehrlich S.D."/>
            <person name="Overbeek R."/>
            <person name="Kyrpides N.C."/>
        </authorList>
    </citation>
    <scope>NUCLEOTIDE SEQUENCE [LARGE SCALE GENOMIC DNA]</scope>
    <source>
        <strain>ATCC 14579 / DSM 31 / CCUG 7414 / JCM 2152 / NBRC 15305 / NCIMB 9373 / NCTC 2599 / NRRL B-3711</strain>
    </source>
</reference>
<gene>
    <name evidence="1" type="primary">tsaD</name>
    <name type="synonym">gcp</name>
    <name type="ordered locus">BC_0289</name>
</gene>
<protein>
    <recommendedName>
        <fullName evidence="1">tRNA N6-adenosine threonylcarbamoyltransferase</fullName>
        <ecNumber evidence="1">2.3.1.234</ecNumber>
    </recommendedName>
    <alternativeName>
        <fullName evidence="1">N6-L-threonylcarbamoyladenine synthase</fullName>
        <shortName evidence="1">t(6)A synthase</shortName>
    </alternativeName>
    <alternativeName>
        <fullName evidence="1">t(6)A37 threonylcarbamoyladenosine biosynthesis protein TsaD</fullName>
    </alternativeName>
    <alternativeName>
        <fullName evidence="1">tRNA threonylcarbamoyladenosine biosynthesis protein TsaD</fullName>
    </alternativeName>
</protein>
<comment type="function">
    <text evidence="1">Required for the formation of a threonylcarbamoyl group on adenosine at position 37 (t(6)A37) in tRNAs that read codons beginning with adenine. Is involved in the transfer of the threonylcarbamoyl moiety of threonylcarbamoyl-AMP (TC-AMP) to the N6 group of A37, together with TsaE and TsaB. TsaD likely plays a direct catalytic role in this reaction.</text>
</comment>
<comment type="catalytic activity">
    <reaction evidence="1">
        <text>L-threonylcarbamoyladenylate + adenosine(37) in tRNA = N(6)-L-threonylcarbamoyladenosine(37) in tRNA + AMP + H(+)</text>
        <dbReference type="Rhea" id="RHEA:37059"/>
        <dbReference type="Rhea" id="RHEA-COMP:10162"/>
        <dbReference type="Rhea" id="RHEA-COMP:10163"/>
        <dbReference type="ChEBI" id="CHEBI:15378"/>
        <dbReference type="ChEBI" id="CHEBI:73682"/>
        <dbReference type="ChEBI" id="CHEBI:74411"/>
        <dbReference type="ChEBI" id="CHEBI:74418"/>
        <dbReference type="ChEBI" id="CHEBI:456215"/>
        <dbReference type="EC" id="2.3.1.234"/>
    </reaction>
</comment>
<comment type="cofactor">
    <cofactor evidence="1">
        <name>Fe(2+)</name>
        <dbReference type="ChEBI" id="CHEBI:29033"/>
    </cofactor>
    <text evidence="1">Binds 1 Fe(2+) ion per subunit.</text>
</comment>
<comment type="subcellular location">
    <subcellularLocation>
        <location evidence="1">Cytoplasm</location>
    </subcellularLocation>
</comment>
<comment type="similarity">
    <text evidence="1">Belongs to the KAE1 / TsaD family.</text>
</comment>
<feature type="chain" id="PRO_0000303264" description="tRNA N6-adenosine threonylcarbamoyltransferase">
    <location>
        <begin position="1"/>
        <end position="343"/>
    </location>
</feature>
<feature type="binding site" evidence="1">
    <location>
        <position position="120"/>
    </location>
    <ligand>
        <name>Fe cation</name>
        <dbReference type="ChEBI" id="CHEBI:24875"/>
    </ligand>
</feature>
<feature type="binding site" evidence="1">
    <location>
        <position position="124"/>
    </location>
    <ligand>
        <name>Fe cation</name>
        <dbReference type="ChEBI" id="CHEBI:24875"/>
    </ligand>
</feature>
<feature type="binding site" evidence="1">
    <location>
        <begin position="142"/>
        <end position="146"/>
    </location>
    <ligand>
        <name>substrate</name>
    </ligand>
</feature>
<feature type="binding site" evidence="1">
    <location>
        <position position="175"/>
    </location>
    <ligand>
        <name>substrate</name>
    </ligand>
</feature>
<feature type="binding site" evidence="1">
    <location>
        <position position="188"/>
    </location>
    <ligand>
        <name>substrate</name>
    </ligand>
</feature>
<feature type="binding site" evidence="1">
    <location>
        <position position="192"/>
    </location>
    <ligand>
        <name>substrate</name>
    </ligand>
</feature>
<feature type="binding site" evidence="1">
    <location>
        <position position="281"/>
    </location>
    <ligand>
        <name>substrate</name>
    </ligand>
</feature>
<feature type="binding site" evidence="1">
    <location>
        <position position="310"/>
    </location>
    <ligand>
        <name>Fe cation</name>
        <dbReference type="ChEBI" id="CHEBI:24875"/>
    </ligand>
</feature>
<evidence type="ECO:0000255" key="1">
    <source>
        <dbReference type="HAMAP-Rule" id="MF_01445"/>
    </source>
</evidence>
<organism>
    <name type="scientific">Bacillus cereus (strain ATCC 14579 / DSM 31 / CCUG 7414 / JCM 2152 / NBRC 15305 / NCIMB 9373 / NCTC 2599 / NRRL B-3711)</name>
    <dbReference type="NCBI Taxonomy" id="226900"/>
    <lineage>
        <taxon>Bacteria</taxon>
        <taxon>Bacillati</taxon>
        <taxon>Bacillota</taxon>
        <taxon>Bacilli</taxon>
        <taxon>Bacillales</taxon>
        <taxon>Bacillaceae</taxon>
        <taxon>Bacillus</taxon>
        <taxon>Bacillus cereus group</taxon>
    </lineage>
</organism>